<proteinExistence type="evidence at protein level"/>
<evidence type="ECO:0000255" key="1">
    <source>
        <dbReference type="HAMAP-Rule" id="MF_00405"/>
    </source>
</evidence>
<evidence type="ECO:0000305" key="2"/>
<evidence type="ECO:0007829" key="3">
    <source>
        <dbReference type="PDB" id="5F6R"/>
    </source>
</evidence>
<gene>
    <name evidence="1" type="primary">fabA</name>
    <name type="ordered locus">YPO1430</name>
    <name type="ordered locus">y2740</name>
    <name type="ordered locus">YP_0875</name>
</gene>
<feature type="chain" id="PRO_0000091626" description="3-hydroxydecanoyl-[acyl-carrier-protein] dehydratase">
    <location>
        <begin position="1"/>
        <end position="172"/>
    </location>
</feature>
<feature type="active site" evidence="1">
    <location>
        <position position="71"/>
    </location>
</feature>
<feature type="helix" evidence="3">
    <location>
        <begin position="10"/>
        <end position="17"/>
    </location>
</feature>
<feature type="turn" evidence="3">
    <location>
        <begin position="18"/>
        <end position="22"/>
    </location>
</feature>
<feature type="helix" evidence="3">
    <location>
        <begin position="32"/>
        <end position="34"/>
    </location>
</feature>
<feature type="strand" evidence="3">
    <location>
        <begin position="38"/>
        <end position="44"/>
    </location>
</feature>
<feature type="turn" evidence="3">
    <location>
        <begin position="48"/>
        <end position="51"/>
    </location>
</feature>
<feature type="strand" evidence="3">
    <location>
        <begin position="54"/>
        <end position="60"/>
    </location>
</feature>
<feature type="helix" evidence="3">
    <location>
        <begin position="66"/>
        <end position="70"/>
    </location>
</feature>
<feature type="helix" evidence="3">
    <location>
        <begin position="80"/>
        <end position="97"/>
    </location>
</feature>
<feature type="strand" evidence="3">
    <location>
        <begin position="102"/>
        <end position="114"/>
    </location>
</feature>
<feature type="strand" evidence="3">
    <location>
        <begin position="124"/>
        <end position="135"/>
    </location>
</feature>
<feature type="strand" evidence="3">
    <location>
        <begin position="137"/>
        <end position="139"/>
    </location>
</feature>
<feature type="strand" evidence="3">
    <location>
        <begin position="141"/>
        <end position="150"/>
    </location>
</feature>
<feature type="strand" evidence="3">
    <location>
        <begin position="153"/>
        <end position="167"/>
    </location>
</feature>
<comment type="function">
    <text evidence="1">Necessary for the introduction of cis unsaturation into fatty acids. Catalyzes the dehydration of (3R)-3-hydroxydecanoyl-ACP to E-(2)-decenoyl-ACP and then its isomerization to Z-(3)-decenoyl-ACP. Can catalyze the dehydratase reaction for beta-hydroxyacyl-ACPs with saturated chain lengths up to 16:0, being most active on intermediate chain length.</text>
</comment>
<comment type="catalytic activity">
    <reaction evidence="1">
        <text>a (3R)-hydroxyacyl-[ACP] = a (2E)-enoyl-[ACP] + H2O</text>
        <dbReference type="Rhea" id="RHEA:13097"/>
        <dbReference type="Rhea" id="RHEA-COMP:9925"/>
        <dbReference type="Rhea" id="RHEA-COMP:9945"/>
        <dbReference type="ChEBI" id="CHEBI:15377"/>
        <dbReference type="ChEBI" id="CHEBI:78784"/>
        <dbReference type="ChEBI" id="CHEBI:78827"/>
        <dbReference type="EC" id="4.2.1.59"/>
    </reaction>
</comment>
<comment type="catalytic activity">
    <reaction evidence="1">
        <text>(3R)-hydroxydecanoyl-[ACP] = (2E)-decenoyl-[ACP] + H2O</text>
        <dbReference type="Rhea" id="RHEA:41860"/>
        <dbReference type="Rhea" id="RHEA-COMP:9638"/>
        <dbReference type="Rhea" id="RHEA-COMP:9639"/>
        <dbReference type="ChEBI" id="CHEBI:15377"/>
        <dbReference type="ChEBI" id="CHEBI:78466"/>
        <dbReference type="ChEBI" id="CHEBI:78467"/>
    </reaction>
</comment>
<comment type="catalytic activity">
    <reaction evidence="1">
        <text>(2E)-decenoyl-[ACP] = (3Z)-decenoyl-[ACP]</text>
        <dbReference type="Rhea" id="RHEA:23568"/>
        <dbReference type="Rhea" id="RHEA-COMP:9639"/>
        <dbReference type="Rhea" id="RHEA-COMP:9927"/>
        <dbReference type="ChEBI" id="CHEBI:78467"/>
        <dbReference type="ChEBI" id="CHEBI:78798"/>
        <dbReference type="EC" id="5.3.3.14"/>
    </reaction>
</comment>
<comment type="pathway">
    <text evidence="1">Lipid metabolism; fatty acid biosynthesis.</text>
</comment>
<comment type="subunit">
    <text evidence="1">Homodimer.</text>
</comment>
<comment type="subcellular location">
    <subcellularLocation>
        <location evidence="1">Cytoplasm</location>
    </subcellularLocation>
</comment>
<comment type="similarity">
    <text evidence="1">Belongs to the thioester dehydratase family. FabA subfamily.</text>
</comment>
<comment type="sequence caution" evidence="2">
    <conflict type="erroneous initiation">
        <sequence resource="EMBL-CDS" id="AAM86292"/>
    </conflict>
</comment>
<comment type="sequence caution" evidence="2">
    <conflict type="erroneous initiation">
        <sequence resource="EMBL-CDS" id="AAS61132"/>
    </conflict>
</comment>
<organism>
    <name type="scientific">Yersinia pestis</name>
    <dbReference type="NCBI Taxonomy" id="632"/>
    <lineage>
        <taxon>Bacteria</taxon>
        <taxon>Pseudomonadati</taxon>
        <taxon>Pseudomonadota</taxon>
        <taxon>Gammaproteobacteria</taxon>
        <taxon>Enterobacterales</taxon>
        <taxon>Yersiniaceae</taxon>
        <taxon>Yersinia</taxon>
    </lineage>
</organism>
<keyword id="KW-0002">3D-structure</keyword>
<keyword id="KW-0963">Cytoplasm</keyword>
<keyword id="KW-0275">Fatty acid biosynthesis</keyword>
<keyword id="KW-0276">Fatty acid metabolism</keyword>
<keyword id="KW-0413">Isomerase</keyword>
<keyword id="KW-0444">Lipid biosynthesis</keyword>
<keyword id="KW-0443">Lipid metabolism</keyword>
<keyword id="KW-0456">Lyase</keyword>
<keyword id="KW-1185">Reference proteome</keyword>
<sequence length="172" mass="18810">MVDKRESYTKEDLEASGRGELFGAGGPPLPAGNMLMMDRIVKMIEDGGSHNKGYVEAELDINPDLWFFGCHFIGDPVMPGCLGLDAMWQLVGFYLGWLGGEGKGRALGVGEVKFTGQVLPDAKKVTYRINFKRVIMRKLIMGVADGEVLVDGKVIYTATDLKVGLFKDTNAF</sequence>
<name>FABA_YERPE</name>
<accession>Q8ZG80</accession>
<accession>Q0WGY6</accession>
<dbReference type="EC" id="4.2.1.59" evidence="1"/>
<dbReference type="EC" id="5.3.3.14" evidence="1"/>
<dbReference type="EMBL" id="AL590842">
    <property type="protein sequence ID" value="CAL20082.1"/>
    <property type="molecule type" value="Genomic_DNA"/>
</dbReference>
<dbReference type="EMBL" id="AE009952">
    <property type="protein sequence ID" value="AAM86292.1"/>
    <property type="status" value="ALT_INIT"/>
    <property type="molecule type" value="Genomic_DNA"/>
</dbReference>
<dbReference type="EMBL" id="AE017042">
    <property type="protein sequence ID" value="AAS61132.1"/>
    <property type="status" value="ALT_INIT"/>
    <property type="molecule type" value="Genomic_DNA"/>
</dbReference>
<dbReference type="PIR" id="AH0174">
    <property type="entry name" value="AH0174"/>
</dbReference>
<dbReference type="RefSeq" id="WP_002220006.1">
    <property type="nucleotide sequence ID" value="NZ_WUCM01000140.1"/>
</dbReference>
<dbReference type="RefSeq" id="YP_002346452.1">
    <property type="nucleotide sequence ID" value="NC_003143.1"/>
</dbReference>
<dbReference type="PDB" id="5F6R">
    <property type="method" value="X-ray"/>
    <property type="resolution" value="1.18 A"/>
    <property type="chains" value="A/B=1-172"/>
</dbReference>
<dbReference type="PDB" id="5HD6">
    <property type="method" value="X-ray"/>
    <property type="resolution" value="1.35 A"/>
    <property type="chains" value="A/B/C/D/E/F/G/H=1-172"/>
</dbReference>
<dbReference type="PDBsum" id="5F6R"/>
<dbReference type="PDBsum" id="5HD6"/>
<dbReference type="SMR" id="Q8ZG80"/>
<dbReference type="STRING" id="214092.YPO1430"/>
<dbReference type="PaxDb" id="214092-YPO1430"/>
<dbReference type="EnsemblBacteria" id="AAS61132">
    <property type="protein sequence ID" value="AAS61132"/>
    <property type="gene ID" value="YP_0875"/>
</dbReference>
<dbReference type="GeneID" id="57977132"/>
<dbReference type="KEGG" id="ype:YPO1430"/>
<dbReference type="KEGG" id="ypj:CH55_1111"/>
<dbReference type="KEGG" id="ypk:y2740"/>
<dbReference type="KEGG" id="ypl:CH46_3696"/>
<dbReference type="KEGG" id="ypm:YP_0875"/>
<dbReference type="KEGG" id="ypv:BZ15_2123"/>
<dbReference type="KEGG" id="ypw:CH59_410"/>
<dbReference type="PATRIC" id="fig|214092.21.peg.1757"/>
<dbReference type="eggNOG" id="COG0764">
    <property type="taxonomic scope" value="Bacteria"/>
</dbReference>
<dbReference type="HOGENOM" id="CLU_097925_0_0_6"/>
<dbReference type="OrthoDB" id="9786735at2"/>
<dbReference type="UniPathway" id="UPA00094"/>
<dbReference type="Proteomes" id="UP000000815">
    <property type="component" value="Chromosome"/>
</dbReference>
<dbReference type="Proteomes" id="UP000001019">
    <property type="component" value="Chromosome"/>
</dbReference>
<dbReference type="Proteomes" id="UP000002490">
    <property type="component" value="Chromosome"/>
</dbReference>
<dbReference type="GO" id="GO:0005737">
    <property type="term" value="C:cytoplasm"/>
    <property type="evidence" value="ECO:0007669"/>
    <property type="project" value="UniProtKB-SubCell"/>
</dbReference>
<dbReference type="GO" id="GO:0019171">
    <property type="term" value="F:(3R)-hydroxyacyl-[acyl-carrier-protein] dehydratase activity"/>
    <property type="evidence" value="ECO:0007669"/>
    <property type="project" value="UniProtKB-UniRule"/>
</dbReference>
<dbReference type="GO" id="GO:0034017">
    <property type="term" value="F:trans-2-decenoyl-acyl-carrier-protein isomerase activity"/>
    <property type="evidence" value="ECO:0007669"/>
    <property type="project" value="UniProtKB-UniRule"/>
</dbReference>
<dbReference type="GO" id="GO:0006636">
    <property type="term" value="P:unsaturated fatty acid biosynthetic process"/>
    <property type="evidence" value="ECO:0007669"/>
    <property type="project" value="UniProtKB-UniRule"/>
</dbReference>
<dbReference type="CDD" id="cd01287">
    <property type="entry name" value="FabA"/>
    <property type="match status" value="1"/>
</dbReference>
<dbReference type="FunFam" id="3.10.129.10:FF:000003">
    <property type="entry name" value="3-hydroxydecanoyl-[acyl-carrier-protein] dehydratase"/>
    <property type="match status" value="1"/>
</dbReference>
<dbReference type="Gene3D" id="3.10.129.10">
    <property type="entry name" value="Hotdog Thioesterase"/>
    <property type="match status" value="1"/>
</dbReference>
<dbReference type="HAMAP" id="MF_00405">
    <property type="entry name" value="FabA"/>
    <property type="match status" value="1"/>
</dbReference>
<dbReference type="InterPro" id="IPR010083">
    <property type="entry name" value="FabA"/>
</dbReference>
<dbReference type="InterPro" id="IPR013114">
    <property type="entry name" value="FabA_FabZ"/>
</dbReference>
<dbReference type="InterPro" id="IPR029069">
    <property type="entry name" value="HotDog_dom_sf"/>
</dbReference>
<dbReference type="NCBIfam" id="TIGR01749">
    <property type="entry name" value="fabA"/>
    <property type="match status" value="1"/>
</dbReference>
<dbReference type="NCBIfam" id="NF003509">
    <property type="entry name" value="PRK05174.1"/>
    <property type="match status" value="1"/>
</dbReference>
<dbReference type="PANTHER" id="PTHR30272">
    <property type="entry name" value="3-HYDROXYACYL-[ACYL-CARRIER-PROTEIN] DEHYDRATASE"/>
    <property type="match status" value="1"/>
</dbReference>
<dbReference type="PANTHER" id="PTHR30272:SF8">
    <property type="entry name" value="3-HYDROXYDECANOYL-[ACYL-CARRIER-PROTEIN] DEHYDRATASE"/>
    <property type="match status" value="1"/>
</dbReference>
<dbReference type="Pfam" id="PF07977">
    <property type="entry name" value="FabA"/>
    <property type="match status" value="1"/>
</dbReference>
<dbReference type="SUPFAM" id="SSF54637">
    <property type="entry name" value="Thioesterase/thiol ester dehydrase-isomerase"/>
    <property type="match status" value="1"/>
</dbReference>
<reference key="1">
    <citation type="journal article" date="2001" name="Nature">
        <title>Genome sequence of Yersinia pestis, the causative agent of plague.</title>
        <authorList>
            <person name="Parkhill J."/>
            <person name="Wren B.W."/>
            <person name="Thomson N.R."/>
            <person name="Titball R.W."/>
            <person name="Holden M.T.G."/>
            <person name="Prentice M.B."/>
            <person name="Sebaihia M."/>
            <person name="James K.D."/>
            <person name="Churcher C.M."/>
            <person name="Mungall K.L."/>
            <person name="Baker S."/>
            <person name="Basham D."/>
            <person name="Bentley S.D."/>
            <person name="Brooks K."/>
            <person name="Cerdeno-Tarraga A.-M."/>
            <person name="Chillingworth T."/>
            <person name="Cronin A."/>
            <person name="Davies R.M."/>
            <person name="Davis P."/>
            <person name="Dougan G."/>
            <person name="Feltwell T."/>
            <person name="Hamlin N."/>
            <person name="Holroyd S."/>
            <person name="Jagels K."/>
            <person name="Karlyshev A.V."/>
            <person name="Leather S."/>
            <person name="Moule S."/>
            <person name="Oyston P.C.F."/>
            <person name="Quail M.A."/>
            <person name="Rutherford K.M."/>
            <person name="Simmonds M."/>
            <person name="Skelton J."/>
            <person name="Stevens K."/>
            <person name="Whitehead S."/>
            <person name="Barrell B.G."/>
        </authorList>
    </citation>
    <scope>NUCLEOTIDE SEQUENCE [LARGE SCALE GENOMIC DNA]</scope>
    <source>
        <strain>CO-92 / Biovar Orientalis</strain>
    </source>
</reference>
<reference key="2">
    <citation type="journal article" date="2002" name="J. Bacteriol.">
        <title>Genome sequence of Yersinia pestis KIM.</title>
        <authorList>
            <person name="Deng W."/>
            <person name="Burland V."/>
            <person name="Plunkett G. III"/>
            <person name="Boutin A."/>
            <person name="Mayhew G.F."/>
            <person name="Liss P."/>
            <person name="Perna N.T."/>
            <person name="Rose D.J."/>
            <person name="Mau B."/>
            <person name="Zhou S."/>
            <person name="Schwartz D.C."/>
            <person name="Fetherston J.D."/>
            <person name="Lindler L.E."/>
            <person name="Brubaker R.R."/>
            <person name="Plano G.V."/>
            <person name="Straley S.C."/>
            <person name="McDonough K.A."/>
            <person name="Nilles M.L."/>
            <person name="Matson J.S."/>
            <person name="Blattner F.R."/>
            <person name="Perry R.D."/>
        </authorList>
    </citation>
    <scope>NUCLEOTIDE SEQUENCE [LARGE SCALE GENOMIC DNA]</scope>
    <source>
        <strain>KIM10+ / Biovar Mediaevalis</strain>
    </source>
</reference>
<reference key="3">
    <citation type="journal article" date="2004" name="DNA Res.">
        <title>Complete genome sequence of Yersinia pestis strain 91001, an isolate avirulent to humans.</title>
        <authorList>
            <person name="Song Y."/>
            <person name="Tong Z."/>
            <person name="Wang J."/>
            <person name="Wang L."/>
            <person name="Guo Z."/>
            <person name="Han Y."/>
            <person name="Zhang J."/>
            <person name="Pei D."/>
            <person name="Zhou D."/>
            <person name="Qin H."/>
            <person name="Pang X."/>
            <person name="Han Y."/>
            <person name="Zhai J."/>
            <person name="Li M."/>
            <person name="Cui B."/>
            <person name="Qi Z."/>
            <person name="Jin L."/>
            <person name="Dai R."/>
            <person name="Chen F."/>
            <person name="Li S."/>
            <person name="Ye C."/>
            <person name="Du Z."/>
            <person name="Lin W."/>
            <person name="Wang J."/>
            <person name="Yu J."/>
            <person name="Yang H."/>
            <person name="Wang J."/>
            <person name="Huang P."/>
            <person name="Yang R."/>
        </authorList>
    </citation>
    <scope>NUCLEOTIDE SEQUENCE [LARGE SCALE GENOMIC DNA]</scope>
    <source>
        <strain>91001 / Biovar Mediaevalis</strain>
    </source>
</reference>
<protein>
    <recommendedName>
        <fullName evidence="1">3-hydroxydecanoyl-[acyl-carrier-protein] dehydratase</fullName>
        <ecNumber evidence="1">4.2.1.59</ecNumber>
    </recommendedName>
    <alternativeName>
        <fullName evidence="1">3-hydroxyacyl-[acyl-carrier-protein] dehydratase FabA</fullName>
    </alternativeName>
    <alternativeName>
        <fullName evidence="1">Beta-hydroxydecanoyl thioester dehydrase</fullName>
    </alternativeName>
    <alternativeName>
        <fullName evidence="1">Trans-2-decenoyl-[acyl-carrier-protein] isomerase</fullName>
        <ecNumber evidence="1">5.3.3.14</ecNumber>
    </alternativeName>
</protein>